<accession>Q0BCK8</accession>
<comment type="function">
    <text evidence="1">Catalyzes the attachment of isoleucine to tRNA(Ile). As IleRS can inadvertently accommodate and process structurally similar amino acids such as valine, to avoid such errors it has two additional distinct tRNA(Ile)-dependent editing activities. One activity is designated as 'pretransfer' editing and involves the hydrolysis of activated Val-AMP. The other activity is designated 'posttransfer' editing and involves deacylation of mischarged Val-tRNA(Ile).</text>
</comment>
<comment type="catalytic activity">
    <reaction evidence="1">
        <text>tRNA(Ile) + L-isoleucine + ATP = L-isoleucyl-tRNA(Ile) + AMP + diphosphate</text>
        <dbReference type="Rhea" id="RHEA:11060"/>
        <dbReference type="Rhea" id="RHEA-COMP:9666"/>
        <dbReference type="Rhea" id="RHEA-COMP:9695"/>
        <dbReference type="ChEBI" id="CHEBI:30616"/>
        <dbReference type="ChEBI" id="CHEBI:33019"/>
        <dbReference type="ChEBI" id="CHEBI:58045"/>
        <dbReference type="ChEBI" id="CHEBI:78442"/>
        <dbReference type="ChEBI" id="CHEBI:78528"/>
        <dbReference type="ChEBI" id="CHEBI:456215"/>
        <dbReference type="EC" id="6.1.1.5"/>
    </reaction>
</comment>
<comment type="cofactor">
    <cofactor evidence="1">
        <name>Zn(2+)</name>
        <dbReference type="ChEBI" id="CHEBI:29105"/>
    </cofactor>
    <text evidence="1">Binds 1 zinc ion per subunit.</text>
</comment>
<comment type="subunit">
    <text evidence="1">Monomer.</text>
</comment>
<comment type="subcellular location">
    <subcellularLocation>
        <location evidence="1">Cytoplasm</location>
    </subcellularLocation>
</comment>
<comment type="domain">
    <text evidence="1">IleRS has two distinct active sites: one for aminoacylation and one for editing. The misactivated valine is translocated from the active site to the editing site, which sterically excludes the correctly activated isoleucine. The single editing site contains two valyl binding pockets, one specific for each substrate (Val-AMP or Val-tRNA(Ile)).</text>
</comment>
<comment type="similarity">
    <text evidence="1">Belongs to the class-I aminoacyl-tRNA synthetase family. IleS type 1 subfamily.</text>
</comment>
<gene>
    <name evidence="1" type="primary">ileS</name>
    <name type="ordered locus">Bamb_2559</name>
</gene>
<keyword id="KW-0030">Aminoacyl-tRNA synthetase</keyword>
<keyword id="KW-0067">ATP-binding</keyword>
<keyword id="KW-0963">Cytoplasm</keyword>
<keyword id="KW-0436">Ligase</keyword>
<keyword id="KW-0479">Metal-binding</keyword>
<keyword id="KW-0547">Nucleotide-binding</keyword>
<keyword id="KW-0648">Protein biosynthesis</keyword>
<keyword id="KW-0862">Zinc</keyword>
<organism>
    <name type="scientific">Burkholderia ambifaria (strain ATCC BAA-244 / DSM 16087 / CCUG 44356 / LMG 19182 / AMMD)</name>
    <name type="common">Burkholderia cepacia (strain AMMD)</name>
    <dbReference type="NCBI Taxonomy" id="339670"/>
    <lineage>
        <taxon>Bacteria</taxon>
        <taxon>Pseudomonadati</taxon>
        <taxon>Pseudomonadota</taxon>
        <taxon>Betaproteobacteria</taxon>
        <taxon>Burkholderiales</taxon>
        <taxon>Burkholderiaceae</taxon>
        <taxon>Burkholderia</taxon>
        <taxon>Burkholderia cepacia complex</taxon>
    </lineage>
</organism>
<evidence type="ECO:0000255" key="1">
    <source>
        <dbReference type="HAMAP-Rule" id="MF_02002"/>
    </source>
</evidence>
<dbReference type="EC" id="6.1.1.5" evidence="1"/>
<dbReference type="EMBL" id="CP000440">
    <property type="protein sequence ID" value="ABI88115.1"/>
    <property type="molecule type" value="Genomic_DNA"/>
</dbReference>
<dbReference type="RefSeq" id="WP_011657715.1">
    <property type="nucleotide sequence ID" value="NC_008390.1"/>
</dbReference>
<dbReference type="SMR" id="Q0BCK8"/>
<dbReference type="GeneID" id="93085235"/>
<dbReference type="KEGG" id="bam:Bamb_2559"/>
<dbReference type="PATRIC" id="fig|339670.21.peg.2347"/>
<dbReference type="eggNOG" id="COG0060">
    <property type="taxonomic scope" value="Bacteria"/>
</dbReference>
<dbReference type="Proteomes" id="UP000000662">
    <property type="component" value="Chromosome 1"/>
</dbReference>
<dbReference type="GO" id="GO:0005829">
    <property type="term" value="C:cytosol"/>
    <property type="evidence" value="ECO:0007669"/>
    <property type="project" value="TreeGrafter"/>
</dbReference>
<dbReference type="GO" id="GO:0002161">
    <property type="term" value="F:aminoacyl-tRNA deacylase activity"/>
    <property type="evidence" value="ECO:0007669"/>
    <property type="project" value="InterPro"/>
</dbReference>
<dbReference type="GO" id="GO:0005524">
    <property type="term" value="F:ATP binding"/>
    <property type="evidence" value="ECO:0007669"/>
    <property type="project" value="UniProtKB-UniRule"/>
</dbReference>
<dbReference type="GO" id="GO:0004822">
    <property type="term" value="F:isoleucine-tRNA ligase activity"/>
    <property type="evidence" value="ECO:0007669"/>
    <property type="project" value="UniProtKB-UniRule"/>
</dbReference>
<dbReference type="GO" id="GO:0000049">
    <property type="term" value="F:tRNA binding"/>
    <property type="evidence" value="ECO:0007669"/>
    <property type="project" value="InterPro"/>
</dbReference>
<dbReference type="GO" id="GO:0008270">
    <property type="term" value="F:zinc ion binding"/>
    <property type="evidence" value="ECO:0007669"/>
    <property type="project" value="UniProtKB-UniRule"/>
</dbReference>
<dbReference type="GO" id="GO:0006428">
    <property type="term" value="P:isoleucyl-tRNA aminoacylation"/>
    <property type="evidence" value="ECO:0007669"/>
    <property type="project" value="UniProtKB-UniRule"/>
</dbReference>
<dbReference type="CDD" id="cd07960">
    <property type="entry name" value="Anticodon_Ia_Ile_BEm"/>
    <property type="match status" value="1"/>
</dbReference>
<dbReference type="CDD" id="cd00818">
    <property type="entry name" value="IleRS_core"/>
    <property type="match status" value="1"/>
</dbReference>
<dbReference type="FunFam" id="1.10.730.20:FF:000001">
    <property type="entry name" value="Isoleucine--tRNA ligase"/>
    <property type="match status" value="1"/>
</dbReference>
<dbReference type="FunFam" id="3.40.50.620:FF:000042">
    <property type="entry name" value="Isoleucine--tRNA ligase"/>
    <property type="match status" value="1"/>
</dbReference>
<dbReference type="FunFam" id="3.40.50.620:FF:000048">
    <property type="entry name" value="Isoleucine--tRNA ligase"/>
    <property type="match status" value="1"/>
</dbReference>
<dbReference type="Gene3D" id="1.10.730.20">
    <property type="match status" value="1"/>
</dbReference>
<dbReference type="Gene3D" id="3.40.50.620">
    <property type="entry name" value="HUPs"/>
    <property type="match status" value="2"/>
</dbReference>
<dbReference type="Gene3D" id="3.90.740.10">
    <property type="entry name" value="Valyl/Leucyl/Isoleucyl-tRNA synthetase, editing domain"/>
    <property type="match status" value="1"/>
</dbReference>
<dbReference type="HAMAP" id="MF_02002">
    <property type="entry name" value="Ile_tRNA_synth_type1"/>
    <property type="match status" value="1"/>
</dbReference>
<dbReference type="InterPro" id="IPR001412">
    <property type="entry name" value="aa-tRNA-synth_I_CS"/>
</dbReference>
<dbReference type="InterPro" id="IPR002300">
    <property type="entry name" value="aa-tRNA-synth_Ia"/>
</dbReference>
<dbReference type="InterPro" id="IPR033708">
    <property type="entry name" value="Anticodon_Ile_BEm"/>
</dbReference>
<dbReference type="InterPro" id="IPR002301">
    <property type="entry name" value="Ile-tRNA-ligase"/>
</dbReference>
<dbReference type="InterPro" id="IPR023585">
    <property type="entry name" value="Ile-tRNA-ligase_type1"/>
</dbReference>
<dbReference type="InterPro" id="IPR050081">
    <property type="entry name" value="Ile-tRNA_ligase"/>
</dbReference>
<dbReference type="InterPro" id="IPR013155">
    <property type="entry name" value="M/V/L/I-tRNA-synth_anticd-bd"/>
</dbReference>
<dbReference type="InterPro" id="IPR014729">
    <property type="entry name" value="Rossmann-like_a/b/a_fold"/>
</dbReference>
<dbReference type="InterPro" id="IPR009080">
    <property type="entry name" value="tRNAsynth_Ia_anticodon-bd"/>
</dbReference>
<dbReference type="InterPro" id="IPR009008">
    <property type="entry name" value="Val/Leu/Ile-tRNA-synth_edit"/>
</dbReference>
<dbReference type="InterPro" id="IPR010663">
    <property type="entry name" value="Znf_FPG/IleRS"/>
</dbReference>
<dbReference type="NCBIfam" id="TIGR00392">
    <property type="entry name" value="ileS"/>
    <property type="match status" value="1"/>
</dbReference>
<dbReference type="PANTHER" id="PTHR42765:SF1">
    <property type="entry name" value="ISOLEUCINE--TRNA LIGASE, MITOCHONDRIAL"/>
    <property type="match status" value="1"/>
</dbReference>
<dbReference type="PANTHER" id="PTHR42765">
    <property type="entry name" value="SOLEUCYL-TRNA SYNTHETASE"/>
    <property type="match status" value="1"/>
</dbReference>
<dbReference type="Pfam" id="PF08264">
    <property type="entry name" value="Anticodon_1"/>
    <property type="match status" value="1"/>
</dbReference>
<dbReference type="Pfam" id="PF00133">
    <property type="entry name" value="tRNA-synt_1"/>
    <property type="match status" value="1"/>
</dbReference>
<dbReference type="Pfam" id="PF06827">
    <property type="entry name" value="zf-FPG_IleRS"/>
    <property type="match status" value="1"/>
</dbReference>
<dbReference type="PRINTS" id="PR00984">
    <property type="entry name" value="TRNASYNTHILE"/>
</dbReference>
<dbReference type="SUPFAM" id="SSF47323">
    <property type="entry name" value="Anticodon-binding domain of a subclass of class I aminoacyl-tRNA synthetases"/>
    <property type="match status" value="1"/>
</dbReference>
<dbReference type="SUPFAM" id="SSF52374">
    <property type="entry name" value="Nucleotidylyl transferase"/>
    <property type="match status" value="1"/>
</dbReference>
<dbReference type="SUPFAM" id="SSF50677">
    <property type="entry name" value="ValRS/IleRS/LeuRS editing domain"/>
    <property type="match status" value="1"/>
</dbReference>
<dbReference type="PROSITE" id="PS00178">
    <property type="entry name" value="AA_TRNA_LIGASE_I"/>
    <property type="match status" value="1"/>
</dbReference>
<reference key="1">
    <citation type="submission" date="2006-08" db="EMBL/GenBank/DDBJ databases">
        <title>Complete sequence of chromosome 1 of Burkholderia cepacia AMMD.</title>
        <authorList>
            <person name="Copeland A."/>
            <person name="Lucas S."/>
            <person name="Lapidus A."/>
            <person name="Barry K."/>
            <person name="Detter J.C."/>
            <person name="Glavina del Rio T."/>
            <person name="Hammon N."/>
            <person name="Israni S."/>
            <person name="Pitluck S."/>
            <person name="Bruce D."/>
            <person name="Chain P."/>
            <person name="Malfatti S."/>
            <person name="Shin M."/>
            <person name="Vergez L."/>
            <person name="Schmutz J."/>
            <person name="Larimer F."/>
            <person name="Land M."/>
            <person name="Hauser L."/>
            <person name="Kyrpides N."/>
            <person name="Kim E."/>
            <person name="Parke J."/>
            <person name="Coenye T."/>
            <person name="Konstantinidis K."/>
            <person name="Ramette A."/>
            <person name="Tiedje J."/>
            <person name="Richardson P."/>
        </authorList>
    </citation>
    <scope>NUCLEOTIDE SEQUENCE [LARGE SCALE GENOMIC DNA]</scope>
    <source>
        <strain>ATCC BAA-244 / DSM 16087 / CCUG 44356 / LMG 19182 / AMMD</strain>
    </source>
</reference>
<protein>
    <recommendedName>
        <fullName evidence="1">Isoleucine--tRNA ligase</fullName>
        <ecNumber evidence="1">6.1.1.5</ecNumber>
    </recommendedName>
    <alternativeName>
        <fullName evidence="1">Isoleucyl-tRNA synthetase</fullName>
        <shortName evidence="1">IleRS</shortName>
    </alternativeName>
</protein>
<proteinExistence type="inferred from homology"/>
<sequence length="945" mass="105855">MSNKKADSKPQAKYPVNLLDTPFPMRGDLPKREPQWVKEWEERGIYEKIRAASKGRPKFILHDGPPYANGDIHLGHAVNKILKDIVVKSRNMAGFDAPYVPGWDCHGMPIEIQIEKQFGKSLPAAEVMSKARAYATEQIEKQKVGFKRLGVLGDWANPYKTMNFVNEAEEIRALGKIIEKGYVYRGLKPVNWCFDCGSALAEAEVEYKDRTDPTIDVMFAFAEPEKTAQAFGLPALPRAEGGIVIWTTTPWTIPANQALNLHPEIVYALVDTERGLLIIAEERVAACMADFKLTGRVVATAPGVKLANLRFHHPLASAHPGYKRTAPVYLGDYVTTDTGTGVVHSSPAYGIEDFMSCKAHGMTDSDFINPVMGDGRYIESLPLFGGLSIWDANPKIVDALNAAGSLLRSEKYTHSYMHCWRHKTPIIYRATSQWFAGMDVTPRDDGKTLREAALEGVEATAFYPSWGKQRLFSMIANRPDWTLSRQRQWGVPMAFFVHKETGELHPRTLELLEEVAKRVEQSGIEAWQSLDPRELIGDDANMYEKNRDTLDVWFDSGTTHWHVLRGSHKDQLQFPADLYLEGSDQHRGWFHSSLLTASMIDGRAPYKGLLTHGFTVDGEGRKMSKSLGNGVDPHEVANRLGAEIIRLWIASTDYSGELAISEEILKRVTEGYRRIRNTLRFLLANLSDFDFAQHAVPVDEWLEIDRYAVAFSAQLQTELLGHYEKYEFHPVVAKLQTYCSEDLGGFYLDVLKDRLYTSAADSRARRSAQTALYHLTHGLLRVLAPFLSFTAEEAWKVFQPASDTVFTETYYAYPEVAGSAALIEKWALLRDVRGNVTKALEEARTANRIGSSLQAEVAVHASGARYDALTSLGDDLKFVLITSAATVVKVDDEAQESVDVAASKYQKCERCWHYREDVGAHADHPTLCGRCFSNLFENGEIRSAA</sequence>
<name>SYI_BURCM</name>
<feature type="chain" id="PRO_1000022047" description="Isoleucine--tRNA ligase">
    <location>
        <begin position="1"/>
        <end position="945"/>
    </location>
</feature>
<feature type="short sequence motif" description="'HIGH' region">
    <location>
        <begin position="66"/>
        <end position="76"/>
    </location>
</feature>
<feature type="short sequence motif" description="'KMSKS' region">
    <location>
        <begin position="622"/>
        <end position="626"/>
    </location>
</feature>
<feature type="binding site" evidence="1">
    <location>
        <position position="581"/>
    </location>
    <ligand>
        <name>L-isoleucyl-5'-AMP</name>
        <dbReference type="ChEBI" id="CHEBI:178002"/>
    </ligand>
</feature>
<feature type="binding site" evidence="1">
    <location>
        <position position="625"/>
    </location>
    <ligand>
        <name>ATP</name>
        <dbReference type="ChEBI" id="CHEBI:30616"/>
    </ligand>
</feature>
<feature type="binding site" evidence="1">
    <location>
        <position position="908"/>
    </location>
    <ligand>
        <name>Zn(2+)</name>
        <dbReference type="ChEBI" id="CHEBI:29105"/>
    </ligand>
</feature>
<feature type="binding site" evidence="1">
    <location>
        <position position="911"/>
    </location>
    <ligand>
        <name>Zn(2+)</name>
        <dbReference type="ChEBI" id="CHEBI:29105"/>
    </ligand>
</feature>
<feature type="binding site" evidence="1">
    <location>
        <position position="928"/>
    </location>
    <ligand>
        <name>Zn(2+)</name>
        <dbReference type="ChEBI" id="CHEBI:29105"/>
    </ligand>
</feature>
<feature type="binding site" evidence="1">
    <location>
        <position position="931"/>
    </location>
    <ligand>
        <name>Zn(2+)</name>
        <dbReference type="ChEBI" id="CHEBI:29105"/>
    </ligand>
</feature>